<accession>A4YIK8</accession>
<protein>
    <recommendedName>
        <fullName evidence="1">Protein Msed_2121</fullName>
    </recommendedName>
</protein>
<evidence type="ECO:0000255" key="1">
    <source>
        <dbReference type="HAMAP-Rule" id="MF_00226"/>
    </source>
</evidence>
<evidence type="ECO:0000305" key="2"/>
<feature type="chain" id="PRO_0000336538" description="Protein Msed_2121">
    <location>
        <begin position="1"/>
        <end position="265"/>
    </location>
</feature>
<keyword id="KW-1185">Reference proteome</keyword>
<proteinExistence type="inferred from homology"/>
<reference key="1">
    <citation type="journal article" date="2008" name="Appl. Environ. Microbiol.">
        <title>The genome sequence of the metal-mobilizing, extremely thermoacidophilic archaeon Metallosphaera sedula provides insights into bioleaching-associated metabolism.</title>
        <authorList>
            <person name="Auernik K.S."/>
            <person name="Maezato Y."/>
            <person name="Blum P.H."/>
            <person name="Kelly R.M."/>
        </authorList>
    </citation>
    <scope>NUCLEOTIDE SEQUENCE [LARGE SCALE GENOMIC DNA]</scope>
    <source>
        <strain>ATCC 51363 / DSM 5348 / JCM 9185 / NBRC 15509 / TH2</strain>
    </source>
</reference>
<dbReference type="EMBL" id="CP000682">
    <property type="protein sequence ID" value="ABP96260.1"/>
    <property type="status" value="ALT_INIT"/>
    <property type="molecule type" value="Genomic_DNA"/>
</dbReference>
<dbReference type="RefSeq" id="WP_374108058.1">
    <property type="nucleotide sequence ID" value="NC_009440.1"/>
</dbReference>
<dbReference type="SMR" id="A4YIK8"/>
<dbReference type="STRING" id="399549.Msed_2121"/>
<dbReference type="GeneID" id="91756658"/>
<dbReference type="KEGG" id="mse:Msed_2121"/>
<dbReference type="eggNOG" id="arCOG00215">
    <property type="taxonomic scope" value="Archaea"/>
</dbReference>
<dbReference type="HOGENOM" id="CLU_030805_0_5_2"/>
<dbReference type="Proteomes" id="UP000000242">
    <property type="component" value="Chromosome"/>
</dbReference>
<dbReference type="CDD" id="cd00885">
    <property type="entry name" value="cinA"/>
    <property type="match status" value="1"/>
</dbReference>
<dbReference type="Gene3D" id="3.40.980.10">
    <property type="entry name" value="MoaB/Mog-like domain"/>
    <property type="match status" value="1"/>
</dbReference>
<dbReference type="HAMAP" id="MF_00226_A">
    <property type="entry name" value="CinA_A"/>
    <property type="match status" value="1"/>
</dbReference>
<dbReference type="InterPro" id="IPR050101">
    <property type="entry name" value="CinA"/>
</dbReference>
<dbReference type="InterPro" id="IPR023055">
    <property type="entry name" value="CinA_Arc"/>
</dbReference>
<dbReference type="InterPro" id="IPR036425">
    <property type="entry name" value="MoaB/Mog-like_dom_sf"/>
</dbReference>
<dbReference type="InterPro" id="IPR001453">
    <property type="entry name" value="MoaB/Mog_dom"/>
</dbReference>
<dbReference type="NCBIfam" id="NF002291">
    <property type="entry name" value="PRK01215.1"/>
    <property type="match status" value="1"/>
</dbReference>
<dbReference type="PANTHER" id="PTHR13939">
    <property type="entry name" value="NICOTINAMIDE-NUCLEOTIDE AMIDOHYDROLASE PNCC"/>
    <property type="match status" value="1"/>
</dbReference>
<dbReference type="PANTHER" id="PTHR13939:SF0">
    <property type="entry name" value="NMN AMIDOHYDROLASE-LIKE PROTEIN YFAY"/>
    <property type="match status" value="1"/>
</dbReference>
<dbReference type="Pfam" id="PF00994">
    <property type="entry name" value="MoCF_biosynth"/>
    <property type="match status" value="1"/>
</dbReference>
<dbReference type="SMART" id="SM00852">
    <property type="entry name" value="MoCF_biosynth"/>
    <property type="match status" value="1"/>
</dbReference>
<dbReference type="SUPFAM" id="SSF53218">
    <property type="entry name" value="Molybdenum cofactor biosynthesis proteins"/>
    <property type="match status" value="1"/>
</dbReference>
<sequence length="265" mass="29389">MLYTAEILTIGNELLTGRTVNTNASYIASRLTLMGFSVRRITAIRDELEEIASVIKEILGRSPAIVVVSGGLGPTYDDMTAEGIAKGLDRKLVMNEDALRELREKYQTRGLPLTQERLKMALLPEGAKPIRNEAGIAPGFTLNVNGTDIVATPGVPREMESVLESFLNHMLTRRPPVYYYEESFLVRGVMESTLAPHIKGIVKETGVYIKTHPKGHETSEPYLEVQIAYSGENPDRVKEIVRSVKERVKAVVRELGGTLDRVQNP</sequence>
<comment type="similarity">
    <text evidence="1">Belongs to the CinA family.</text>
</comment>
<comment type="sequence caution" evidence="2">
    <conflict type="erroneous initiation">
        <sequence resource="EMBL-CDS" id="ABP96260"/>
    </conflict>
</comment>
<gene>
    <name type="ordered locus">Msed_2121</name>
</gene>
<organism>
    <name type="scientific">Metallosphaera sedula (strain ATCC 51363 / DSM 5348 / JCM 9185 / NBRC 15509 / TH2)</name>
    <dbReference type="NCBI Taxonomy" id="399549"/>
    <lineage>
        <taxon>Archaea</taxon>
        <taxon>Thermoproteota</taxon>
        <taxon>Thermoprotei</taxon>
        <taxon>Sulfolobales</taxon>
        <taxon>Sulfolobaceae</taxon>
        <taxon>Metallosphaera</taxon>
    </lineage>
</organism>
<name>Y2121_METS5</name>